<keyword id="KW-0208">D-amino acid</keyword>
<keyword id="KW-0903">Direct protein sequencing</keyword>
<keyword id="KW-0372">Hormone</keyword>
<keyword id="KW-0964">Secreted</keyword>
<comment type="function">
    <text>Cardioactive; has both positive chronotropic and inotropic effects on the heart. Ocp-2 is a 1000 time less active than Ocp-1.</text>
</comment>
<comment type="subcellular location">
    <subcellularLocation>
        <location>Secreted</location>
    </subcellularLocation>
</comment>
<comment type="PTM">
    <text>Ocp-2 has L-Phe instead of D-Phe.</text>
</comment>
<comment type="mass spectrometry" mass="395.2" method="MALDI" evidence="1"/>
<proteinExistence type="evidence at protein level"/>
<dbReference type="GO" id="GO:0005576">
    <property type="term" value="C:extracellular region"/>
    <property type="evidence" value="ECO:0007669"/>
    <property type="project" value="UniProtKB-SubCell"/>
</dbReference>
<dbReference type="GO" id="GO:0005179">
    <property type="term" value="F:hormone activity"/>
    <property type="evidence" value="ECO:0007669"/>
    <property type="project" value="UniProtKB-KW"/>
</dbReference>
<feature type="peptide" id="PRO_0000044179" description="Cardioactive peptide Ocp-1/Ocp-2">
    <location>
        <begin position="1"/>
        <end position="4"/>
    </location>
</feature>
<feature type="modified residue" description="D-phenylalanine; in form Ocp-1" evidence="1">
    <location>
        <position position="2"/>
    </location>
</feature>
<accession>P58648</accession>
<evidence type="ECO:0000269" key="1">
    <source>
    </source>
</evidence>
<sequence length="4" mass="394">GFGD</sequence>
<reference key="1">
    <citation type="journal article" date="2000" name="Peptides">
        <title>Cardioactive peptides isolated from the brain of a Japanese octopus, Octopus minor.</title>
        <authorList>
            <person name="Iwakoshi E."/>
            <person name="Hisada M."/>
            <person name="Minakata H."/>
        </authorList>
    </citation>
    <scope>PROTEIN SEQUENCE</scope>
    <scope>D-AMINO ACID AT PHE-2</scope>
    <scope>SYNTHESIS</scope>
    <scope>MASS SPECTROMETRY</scope>
    <scope>CHARACTERIZATION</scope>
    <source>
        <tissue>Brain</tissue>
    </source>
</reference>
<organism>
    <name type="scientific">Callistoctopus minor</name>
    <name type="common">Octopus</name>
    <name type="synonym">Octopus minor</name>
    <dbReference type="NCBI Taxonomy" id="515824"/>
    <lineage>
        <taxon>Eukaryota</taxon>
        <taxon>Metazoa</taxon>
        <taxon>Spiralia</taxon>
        <taxon>Lophotrochozoa</taxon>
        <taxon>Mollusca</taxon>
        <taxon>Cephalopoda</taxon>
        <taxon>Coleoidea</taxon>
        <taxon>Octopodiformes</taxon>
        <taxon>Octopoda</taxon>
        <taxon>Incirrata</taxon>
        <taxon>Octopodidae</taxon>
        <taxon>Callistoctopus</taxon>
    </lineage>
</organism>
<protein>
    <recommendedName>
        <fullName>Cardioactive peptide Ocp-1/Ocp-2</fullName>
    </recommendedName>
</protein>
<name>OCP1_CALMC</name>